<gene>
    <name type="ordered locus">MJ0011</name>
</gene>
<proteinExistence type="predicted"/>
<accession>Q60327</accession>
<sequence>MIGKLKNLFKLGKGKKEEKAKKSLEGKGLIIFENTKDAMRAESILKDKYKIKVVAPPPEIREGCDLAIEYELIDEFGIKRELESNDIKPLKFISLNDYSLKPLELIKVKEVDGFILVRCGNMKITIDKEGNIVNISGGGCPDVPYLALKLKGRNIKDIKEEETPKNLGFTLCAYILNKGSSQRGHSWTIIDFEVLSI</sequence>
<organism>
    <name type="scientific">Methanocaldococcus jannaschii (strain ATCC 43067 / DSM 2661 / JAL-1 / JCM 10045 / NBRC 100440)</name>
    <name type="common">Methanococcus jannaschii</name>
    <dbReference type="NCBI Taxonomy" id="243232"/>
    <lineage>
        <taxon>Archaea</taxon>
        <taxon>Methanobacteriati</taxon>
        <taxon>Methanobacteriota</taxon>
        <taxon>Methanomada group</taxon>
        <taxon>Methanococci</taxon>
        <taxon>Methanococcales</taxon>
        <taxon>Methanocaldococcaceae</taxon>
        <taxon>Methanocaldococcus</taxon>
    </lineage>
</organism>
<feature type="chain" id="PRO_0000106651" description="Uncharacterized protein MJ0011">
    <location>
        <begin position="1"/>
        <end position="197"/>
    </location>
</feature>
<name>Y011_METJA</name>
<reference key="1">
    <citation type="journal article" date="1996" name="Science">
        <title>Complete genome sequence of the methanogenic archaeon, Methanococcus jannaschii.</title>
        <authorList>
            <person name="Bult C.J."/>
            <person name="White O."/>
            <person name="Olsen G.J."/>
            <person name="Zhou L."/>
            <person name="Fleischmann R.D."/>
            <person name="Sutton G.G."/>
            <person name="Blake J.A."/>
            <person name="FitzGerald L.M."/>
            <person name="Clayton R.A."/>
            <person name="Gocayne J.D."/>
            <person name="Kerlavage A.R."/>
            <person name="Dougherty B.A."/>
            <person name="Tomb J.-F."/>
            <person name="Adams M.D."/>
            <person name="Reich C.I."/>
            <person name="Overbeek R."/>
            <person name="Kirkness E.F."/>
            <person name="Weinstock K.G."/>
            <person name="Merrick J.M."/>
            <person name="Glodek A."/>
            <person name="Scott J.L."/>
            <person name="Geoghagen N.S.M."/>
            <person name="Weidman J.F."/>
            <person name="Fuhrmann J.L."/>
            <person name="Nguyen D."/>
            <person name="Utterback T.R."/>
            <person name="Kelley J.M."/>
            <person name="Peterson J.D."/>
            <person name="Sadow P.W."/>
            <person name="Hanna M.C."/>
            <person name="Cotton M.D."/>
            <person name="Roberts K.M."/>
            <person name="Hurst M.A."/>
            <person name="Kaine B.P."/>
            <person name="Borodovsky M."/>
            <person name="Klenk H.-P."/>
            <person name="Fraser C.M."/>
            <person name="Smith H.O."/>
            <person name="Woese C.R."/>
            <person name="Venter J.C."/>
        </authorList>
    </citation>
    <scope>NUCLEOTIDE SEQUENCE [LARGE SCALE GENOMIC DNA]</scope>
    <source>
        <strain>ATCC 43067 / DSM 2661 / JAL-1 / JCM 10045 / NBRC 100440</strain>
    </source>
</reference>
<dbReference type="EMBL" id="L77117">
    <property type="protein sequence ID" value="AAB97999.1"/>
    <property type="molecule type" value="Genomic_DNA"/>
</dbReference>
<dbReference type="PIR" id="C64301">
    <property type="entry name" value="C64301"/>
</dbReference>
<dbReference type="RefSeq" id="WP_010869504.1">
    <property type="nucleotide sequence ID" value="NC_000909.1"/>
</dbReference>
<dbReference type="STRING" id="243232.MJ_0011"/>
<dbReference type="PaxDb" id="243232-MJ_0011"/>
<dbReference type="EnsemblBacteria" id="AAB97999">
    <property type="protein sequence ID" value="AAB97999"/>
    <property type="gene ID" value="MJ_0011"/>
</dbReference>
<dbReference type="GeneID" id="1450850"/>
<dbReference type="KEGG" id="mja:MJ_0011"/>
<dbReference type="eggNOG" id="arCOG05017">
    <property type="taxonomic scope" value="Archaea"/>
</dbReference>
<dbReference type="HOGENOM" id="CLU_117547_0_0_2"/>
<dbReference type="InParanoid" id="Q60327"/>
<dbReference type="OrthoDB" id="65224at2157"/>
<dbReference type="Proteomes" id="UP000000805">
    <property type="component" value="Chromosome"/>
</dbReference>
<dbReference type="InterPro" id="IPR021778">
    <property type="entry name" value="Se/S_carrier-like"/>
</dbReference>
<dbReference type="Pfam" id="PF11823">
    <property type="entry name" value="Se_S_carrier"/>
    <property type="match status" value="1"/>
</dbReference>
<protein>
    <recommendedName>
        <fullName>Uncharacterized protein MJ0011</fullName>
    </recommendedName>
</protein>
<keyword id="KW-1185">Reference proteome</keyword>